<reference key="1">
    <citation type="journal article" date="1995" name="Gene">
        <title>Schizosaccharomyces pombe and Candida albicans cDNA homologues of the Saccharomyces cerevisiae UBC4 gene.</title>
        <authorList>
            <person name="Damagnez V."/>
            <person name="Rolfe M."/>
            <person name="Cottarel G."/>
        </authorList>
    </citation>
    <scope>NUCLEOTIDE SEQUENCE [MRNA]</scope>
</reference>
<feature type="chain" id="PRO_0000082544" description="Ubiquitin-conjugating enzyme E2 4">
    <location>
        <begin position="1"/>
        <end position="147"/>
    </location>
</feature>
<feature type="domain" description="UBC core" evidence="3">
    <location>
        <begin position="1"/>
        <end position="147"/>
    </location>
</feature>
<feature type="active site" description="Glycyl thioester intermediate" evidence="3 4">
    <location>
        <position position="85"/>
    </location>
</feature>
<keyword id="KW-0067">ATP-binding</keyword>
<keyword id="KW-0547">Nucleotide-binding</keyword>
<keyword id="KW-0808">Transferase</keyword>
<keyword id="KW-0833">Ubl conjugation pathway</keyword>
<protein>
    <recommendedName>
        <fullName>Ubiquitin-conjugating enzyme E2 4</fullName>
        <ecNumber>2.3.2.23</ecNumber>
    </recommendedName>
    <alternativeName>
        <fullName>E2 ubiquitin-conjugating enzyme 4</fullName>
    </alternativeName>
    <alternativeName>
        <fullName>Ubiquitin carrier protein 4</fullName>
    </alternativeName>
    <alternativeName>
        <fullName>Ubiquitin-protein ligase 4</fullName>
    </alternativeName>
</protein>
<proteinExistence type="evidence at transcript level"/>
<organism>
    <name type="scientific">Candida albicans</name>
    <name type="common">Yeast</name>
    <dbReference type="NCBI Taxonomy" id="5476"/>
    <lineage>
        <taxon>Eukaryota</taxon>
        <taxon>Fungi</taxon>
        <taxon>Dikarya</taxon>
        <taxon>Ascomycota</taxon>
        <taxon>Saccharomycotina</taxon>
        <taxon>Pichiomycetes</taxon>
        <taxon>Debaryomycetaceae</taxon>
        <taxon>Candida/Lodderomyces clade</taxon>
        <taxon>Candida</taxon>
    </lineage>
</organism>
<sequence>MSLKRINKELSDLGRDPPSSCSAGPVGDDLYHWQASIMGPPDSPYAGGVFFLSIHFPTDYPLKPPKIALTTKIYHPNINSNGNICLDILKDQWSPALTISKVLLSICSLLTDANPDDPLVPEIAHIYKQDRKKYEATAKEWTKKYAV</sequence>
<name>UBC4_CANAX</name>
<comment type="function">
    <text evidence="1 2">E2 ubiquitin-conjugating enzyme that catalyzes the covalent attachment of ubiquitin to other proteins (By similarity). Mediates the selective degradation of short-lived and abnormal proteins (By similarity). Mediates ubiquitination of PEX5 (By similarity).</text>
</comment>
<comment type="catalytic activity">
    <reaction evidence="3 4">
        <text>S-ubiquitinyl-[E1 ubiquitin-activating enzyme]-L-cysteine + [E2 ubiquitin-conjugating enzyme]-L-cysteine = [E1 ubiquitin-activating enzyme]-L-cysteine + S-ubiquitinyl-[E2 ubiquitin-conjugating enzyme]-L-cysteine.</text>
        <dbReference type="EC" id="2.3.2.23"/>
    </reaction>
</comment>
<comment type="pathway">
    <text evidence="3">Protein modification; protein ubiquitination.</text>
</comment>
<comment type="similarity">
    <text evidence="3">Belongs to the ubiquitin-conjugating enzyme family.</text>
</comment>
<accession>P43102</accession>
<evidence type="ECO:0000250" key="1">
    <source>
        <dbReference type="UniProtKB" id="P15731"/>
    </source>
</evidence>
<evidence type="ECO:0000250" key="2">
    <source>
        <dbReference type="UniProtKB" id="P46595"/>
    </source>
</evidence>
<evidence type="ECO:0000255" key="3">
    <source>
        <dbReference type="PROSITE-ProRule" id="PRU00388"/>
    </source>
</evidence>
<evidence type="ECO:0000255" key="4">
    <source>
        <dbReference type="PROSITE-ProRule" id="PRU10133"/>
    </source>
</evidence>
<dbReference type="EC" id="2.3.2.23"/>
<dbReference type="EMBL" id="L37383">
    <property type="status" value="NOT_ANNOTATED_CDS"/>
    <property type="molecule type" value="mRNA"/>
</dbReference>
<dbReference type="SMR" id="P43102"/>
<dbReference type="VEuPathDB" id="FungiDB:CAWG_02261"/>
<dbReference type="VEuPathDB" id="FungiDB:CR_09970W_A"/>
<dbReference type="UniPathway" id="UPA00143"/>
<dbReference type="GO" id="GO:0005524">
    <property type="term" value="F:ATP binding"/>
    <property type="evidence" value="ECO:0007669"/>
    <property type="project" value="UniProtKB-KW"/>
</dbReference>
<dbReference type="GO" id="GO:0070628">
    <property type="term" value="F:proteasome binding"/>
    <property type="evidence" value="ECO:0007669"/>
    <property type="project" value="EnsemblFungi"/>
</dbReference>
<dbReference type="GO" id="GO:0061631">
    <property type="term" value="F:ubiquitin conjugating enzyme activity"/>
    <property type="evidence" value="ECO:0007669"/>
    <property type="project" value="UniProtKB-EC"/>
</dbReference>
<dbReference type="GO" id="GO:0004842">
    <property type="term" value="F:ubiquitin-protein transferase activity"/>
    <property type="evidence" value="ECO:0000250"/>
    <property type="project" value="UniProtKB"/>
</dbReference>
<dbReference type="GO" id="GO:0000209">
    <property type="term" value="P:protein polyubiquitination"/>
    <property type="evidence" value="ECO:0000250"/>
    <property type="project" value="UniProtKB"/>
</dbReference>
<dbReference type="CDD" id="cd23792">
    <property type="entry name" value="UBCc_UBE2D"/>
    <property type="match status" value="1"/>
</dbReference>
<dbReference type="FunFam" id="3.10.110.10:FF:000010">
    <property type="entry name" value="Ubiquitin-conjugating enzyme E2-16 kDa"/>
    <property type="match status" value="1"/>
</dbReference>
<dbReference type="Gene3D" id="3.10.110.10">
    <property type="entry name" value="Ubiquitin Conjugating Enzyme"/>
    <property type="match status" value="1"/>
</dbReference>
<dbReference type="InterPro" id="IPR000608">
    <property type="entry name" value="UBQ-conjugat_E2_core"/>
</dbReference>
<dbReference type="InterPro" id="IPR023313">
    <property type="entry name" value="UBQ-conjugating_AS"/>
</dbReference>
<dbReference type="InterPro" id="IPR016135">
    <property type="entry name" value="UBQ-conjugating_enzyme/RWD"/>
</dbReference>
<dbReference type="PANTHER" id="PTHR24068">
    <property type="entry name" value="UBIQUITIN-CONJUGATING ENZYME E2"/>
    <property type="match status" value="1"/>
</dbReference>
<dbReference type="Pfam" id="PF00179">
    <property type="entry name" value="UQ_con"/>
    <property type="match status" value="1"/>
</dbReference>
<dbReference type="SMART" id="SM00212">
    <property type="entry name" value="UBCc"/>
    <property type="match status" value="1"/>
</dbReference>
<dbReference type="SUPFAM" id="SSF54495">
    <property type="entry name" value="UBC-like"/>
    <property type="match status" value="1"/>
</dbReference>
<dbReference type="PROSITE" id="PS00183">
    <property type="entry name" value="UBC_1"/>
    <property type="match status" value="1"/>
</dbReference>
<dbReference type="PROSITE" id="PS50127">
    <property type="entry name" value="UBC_2"/>
    <property type="match status" value="1"/>
</dbReference>
<gene>
    <name type="primary">UBC4</name>
</gene>